<gene>
    <name evidence="1" type="primary">queF</name>
    <name type="ordered locus">CBUD_1955</name>
</gene>
<keyword id="KW-0963">Cytoplasm</keyword>
<keyword id="KW-0521">NADP</keyword>
<keyword id="KW-0560">Oxidoreductase</keyword>
<keyword id="KW-0671">Queuosine biosynthesis</keyword>
<sequence>MSTLRVLHEKSELGKTTVYPKEYAPHLLLPIPRDLNRKTLNVNVSEPPPFYGYDLWNAYELSWLNEKGKPFAARGEFIIPATSSHLIESKSFKLYLNSFNNERFADAAAVSQTMKRDLSKRVNESVTVNFILHETEIPVAYSPKGSLLDVLDIAIDTYSPDPNLLSTSQETVTETLYSHLLKSNCPVTGQPDWGSIEIHYTGPKIDHAQLLKYIISYRNHEEFHEACVERFFMDILRHCRPQELTVQARYTRRGGLDINPYRSTNPTFSVQNHRSFRQ</sequence>
<evidence type="ECO:0000255" key="1">
    <source>
        <dbReference type="HAMAP-Rule" id="MF_00817"/>
    </source>
</evidence>
<evidence type="ECO:0000256" key="2">
    <source>
        <dbReference type="SAM" id="MobiDB-lite"/>
    </source>
</evidence>
<reference key="1">
    <citation type="journal article" date="2009" name="Infect. Immun.">
        <title>Comparative genomics reveal extensive transposon-mediated genomic plasticity and diversity among potential effector proteins within the genus Coxiella.</title>
        <authorList>
            <person name="Beare P.A."/>
            <person name="Unsworth N."/>
            <person name="Andoh M."/>
            <person name="Voth D.E."/>
            <person name="Omsland A."/>
            <person name="Gilk S.D."/>
            <person name="Williams K.P."/>
            <person name="Sobral B.W."/>
            <person name="Kupko J.J. III"/>
            <person name="Porcella S.F."/>
            <person name="Samuel J.E."/>
            <person name="Heinzen R.A."/>
        </authorList>
    </citation>
    <scope>NUCLEOTIDE SEQUENCE [LARGE SCALE GENOMIC DNA]</scope>
    <source>
        <strain>Dugway 5J108-111</strain>
    </source>
</reference>
<accession>A9KEP6</accession>
<name>QUEF_COXBN</name>
<organism>
    <name type="scientific">Coxiella burnetii (strain Dugway 5J108-111)</name>
    <dbReference type="NCBI Taxonomy" id="434922"/>
    <lineage>
        <taxon>Bacteria</taxon>
        <taxon>Pseudomonadati</taxon>
        <taxon>Pseudomonadota</taxon>
        <taxon>Gammaproteobacteria</taxon>
        <taxon>Legionellales</taxon>
        <taxon>Coxiellaceae</taxon>
        <taxon>Coxiella</taxon>
    </lineage>
</organism>
<proteinExistence type="inferred from homology"/>
<protein>
    <recommendedName>
        <fullName evidence="1">NADPH-dependent 7-cyano-7-deazaguanine reductase</fullName>
        <ecNumber evidence="1">1.7.1.13</ecNumber>
    </recommendedName>
    <alternativeName>
        <fullName evidence="1">7-cyano-7-carbaguanine reductase</fullName>
    </alternativeName>
    <alternativeName>
        <fullName evidence="1">NADPH-dependent nitrile oxidoreductase</fullName>
    </alternativeName>
    <alternativeName>
        <fullName evidence="1">PreQ(0) reductase</fullName>
    </alternativeName>
</protein>
<feature type="chain" id="PRO_1000083824" description="NADPH-dependent 7-cyano-7-deazaguanine reductase">
    <location>
        <begin position="1"/>
        <end position="278"/>
    </location>
</feature>
<feature type="region of interest" description="Disordered" evidence="2">
    <location>
        <begin position="255"/>
        <end position="278"/>
    </location>
</feature>
<feature type="compositionally biased region" description="Polar residues" evidence="2">
    <location>
        <begin position="261"/>
        <end position="278"/>
    </location>
</feature>
<feature type="active site" description="Thioimide intermediate" evidence="1">
    <location>
        <position position="185"/>
    </location>
</feature>
<feature type="active site" description="Proton donor" evidence="1">
    <location>
        <position position="192"/>
    </location>
</feature>
<feature type="binding site" evidence="1">
    <location>
        <begin position="87"/>
        <end position="89"/>
    </location>
    <ligand>
        <name>substrate</name>
    </ligand>
</feature>
<feature type="binding site" evidence="1">
    <location>
        <begin position="89"/>
        <end position="90"/>
    </location>
    <ligand>
        <name>NADPH</name>
        <dbReference type="ChEBI" id="CHEBI:57783"/>
    </ligand>
</feature>
<feature type="binding site" evidence="1">
    <location>
        <begin position="224"/>
        <end position="225"/>
    </location>
    <ligand>
        <name>substrate</name>
    </ligand>
</feature>
<feature type="binding site" evidence="1">
    <location>
        <begin position="253"/>
        <end position="254"/>
    </location>
    <ligand>
        <name>NADPH</name>
        <dbReference type="ChEBI" id="CHEBI:57783"/>
    </ligand>
</feature>
<comment type="function">
    <text evidence="1">Catalyzes the NADPH-dependent reduction of 7-cyano-7-deazaguanine (preQ0) to 7-aminomethyl-7-deazaguanine (preQ1).</text>
</comment>
<comment type="catalytic activity">
    <reaction evidence="1">
        <text>7-aminomethyl-7-carbaguanine + 2 NADP(+) = 7-cyano-7-deazaguanine + 2 NADPH + 3 H(+)</text>
        <dbReference type="Rhea" id="RHEA:13409"/>
        <dbReference type="ChEBI" id="CHEBI:15378"/>
        <dbReference type="ChEBI" id="CHEBI:45075"/>
        <dbReference type="ChEBI" id="CHEBI:57783"/>
        <dbReference type="ChEBI" id="CHEBI:58349"/>
        <dbReference type="ChEBI" id="CHEBI:58703"/>
        <dbReference type="EC" id="1.7.1.13"/>
    </reaction>
</comment>
<comment type="pathway">
    <text evidence="1">tRNA modification; tRNA-queuosine biosynthesis.</text>
</comment>
<comment type="subunit">
    <text evidence="1">Homodimer.</text>
</comment>
<comment type="subcellular location">
    <subcellularLocation>
        <location evidence="1">Cytoplasm</location>
    </subcellularLocation>
</comment>
<comment type="similarity">
    <text evidence="1">Belongs to the GTP cyclohydrolase I family. QueF type 2 subfamily.</text>
</comment>
<dbReference type="EC" id="1.7.1.13" evidence="1"/>
<dbReference type="EMBL" id="CP000733">
    <property type="protein sequence ID" value="ABS78127.1"/>
    <property type="molecule type" value="Genomic_DNA"/>
</dbReference>
<dbReference type="RefSeq" id="WP_011997347.1">
    <property type="nucleotide sequence ID" value="NC_009727.1"/>
</dbReference>
<dbReference type="SMR" id="A9KEP6"/>
<dbReference type="KEGG" id="cbd:CBUD_1955"/>
<dbReference type="HOGENOM" id="CLU_054738_0_0_6"/>
<dbReference type="UniPathway" id="UPA00392"/>
<dbReference type="Proteomes" id="UP000008555">
    <property type="component" value="Chromosome"/>
</dbReference>
<dbReference type="GO" id="GO:0005737">
    <property type="term" value="C:cytoplasm"/>
    <property type="evidence" value="ECO:0007669"/>
    <property type="project" value="UniProtKB-SubCell"/>
</dbReference>
<dbReference type="GO" id="GO:0033739">
    <property type="term" value="F:preQ1 synthase activity"/>
    <property type="evidence" value="ECO:0007669"/>
    <property type="project" value="UniProtKB-UniRule"/>
</dbReference>
<dbReference type="GO" id="GO:0008616">
    <property type="term" value="P:queuosine biosynthetic process"/>
    <property type="evidence" value="ECO:0007669"/>
    <property type="project" value="UniProtKB-UniRule"/>
</dbReference>
<dbReference type="GO" id="GO:0006400">
    <property type="term" value="P:tRNA modification"/>
    <property type="evidence" value="ECO:0007669"/>
    <property type="project" value="UniProtKB-UniRule"/>
</dbReference>
<dbReference type="Gene3D" id="3.30.1130.10">
    <property type="match status" value="2"/>
</dbReference>
<dbReference type="HAMAP" id="MF_00817">
    <property type="entry name" value="QueF_type2"/>
    <property type="match status" value="1"/>
</dbReference>
<dbReference type="InterPro" id="IPR043133">
    <property type="entry name" value="GTP-CH-I_C/QueF"/>
</dbReference>
<dbReference type="InterPro" id="IPR050084">
    <property type="entry name" value="NADPH_dep_7-cyano-7-deazaG_red"/>
</dbReference>
<dbReference type="InterPro" id="IPR029500">
    <property type="entry name" value="QueF"/>
</dbReference>
<dbReference type="InterPro" id="IPR029139">
    <property type="entry name" value="QueF_N"/>
</dbReference>
<dbReference type="InterPro" id="IPR016428">
    <property type="entry name" value="QueF_type2"/>
</dbReference>
<dbReference type="NCBIfam" id="TIGR03138">
    <property type="entry name" value="QueF"/>
    <property type="match status" value="1"/>
</dbReference>
<dbReference type="PANTHER" id="PTHR34354">
    <property type="entry name" value="NADPH-DEPENDENT 7-CYANO-7-DEAZAGUANINE REDUCTASE"/>
    <property type="match status" value="1"/>
</dbReference>
<dbReference type="PANTHER" id="PTHR34354:SF1">
    <property type="entry name" value="NADPH-DEPENDENT 7-CYANO-7-DEAZAGUANINE REDUCTASE"/>
    <property type="match status" value="1"/>
</dbReference>
<dbReference type="Pfam" id="PF14489">
    <property type="entry name" value="QueF"/>
    <property type="match status" value="1"/>
</dbReference>
<dbReference type="Pfam" id="PF14819">
    <property type="entry name" value="QueF_N"/>
    <property type="match status" value="1"/>
</dbReference>
<dbReference type="PIRSF" id="PIRSF004750">
    <property type="entry name" value="Nitrile_oxidored_YqcD_prd"/>
    <property type="match status" value="1"/>
</dbReference>
<dbReference type="SUPFAM" id="SSF55620">
    <property type="entry name" value="Tetrahydrobiopterin biosynthesis enzymes-like"/>
    <property type="match status" value="1"/>
</dbReference>